<feature type="chain" id="PRO_0000234895" description="Large ribosomal subunit protein uL10">
    <location>
        <begin position="1"/>
        <end position="167"/>
    </location>
</feature>
<name>RL10_STRT1</name>
<proteinExistence type="inferred from homology"/>
<keyword id="KW-0687">Ribonucleoprotein</keyword>
<keyword id="KW-0689">Ribosomal protein</keyword>
<keyword id="KW-0694">RNA-binding</keyword>
<keyword id="KW-0699">rRNA-binding</keyword>
<reference key="1">
    <citation type="journal article" date="2004" name="Nat. Biotechnol.">
        <title>Complete sequence and comparative genome analysis of the dairy bacterium Streptococcus thermophilus.</title>
        <authorList>
            <person name="Bolotin A."/>
            <person name="Quinquis B."/>
            <person name="Renault P."/>
            <person name="Sorokin A."/>
            <person name="Ehrlich S.D."/>
            <person name="Kulakauskas S."/>
            <person name="Lapidus A."/>
            <person name="Goltsman E."/>
            <person name="Mazur M."/>
            <person name="Pusch G.D."/>
            <person name="Fonstein M."/>
            <person name="Overbeek R."/>
            <person name="Kyprides N."/>
            <person name="Purnelle B."/>
            <person name="Prozzi D."/>
            <person name="Ngui K."/>
            <person name="Masuy D."/>
            <person name="Hancy F."/>
            <person name="Burteau S."/>
            <person name="Boutry M."/>
            <person name="Delcour J."/>
            <person name="Goffeau A."/>
            <person name="Hols P."/>
        </authorList>
    </citation>
    <scope>NUCLEOTIDE SEQUENCE [LARGE SCALE GENOMIC DNA]</scope>
    <source>
        <strain>CNRZ 1066</strain>
    </source>
</reference>
<protein>
    <recommendedName>
        <fullName evidence="1">Large ribosomal subunit protein uL10</fullName>
    </recommendedName>
    <alternativeName>
        <fullName evidence="2">50S ribosomal protein L10</fullName>
    </alternativeName>
</protein>
<comment type="function">
    <text evidence="1">Forms part of the ribosomal stalk, playing a central role in the interaction of the ribosome with GTP-bound translation factors.</text>
</comment>
<comment type="subunit">
    <text evidence="1">Part of the ribosomal stalk of the 50S ribosomal subunit. The N-terminus interacts with L11 and the large rRNA to form the base of the stalk. The C-terminus forms an elongated spine to which L12 dimers bind in a sequential fashion forming a multimeric L10(L12)X complex.</text>
</comment>
<comment type="similarity">
    <text evidence="1">Belongs to the universal ribosomal protein uL10 family.</text>
</comment>
<comment type="sequence caution" evidence="2">
    <conflict type="erroneous initiation">
        <sequence resource="EMBL-CDS" id="AAV62132"/>
    </conflict>
</comment>
<accession>Q5M0W5</accession>
<gene>
    <name evidence="1" type="primary">rplJ</name>
    <name type="ordered locus">str0536</name>
</gene>
<evidence type="ECO:0000255" key="1">
    <source>
        <dbReference type="HAMAP-Rule" id="MF_00362"/>
    </source>
</evidence>
<evidence type="ECO:0000305" key="2"/>
<sequence length="167" mass="17463">MSEAIIAKKAEQVAIVADKMKAAASIVVVDSRGLTVDQDTVLRRNLRESGVEFKVIKNSILSRAAEKAGLEDLKKLFVGPSAVAFSNEDVIAPAKVISEFAKGAEALEIKGGVVDGAITSVEEINALASLPNKEGMLSMLLSVLQAPVRNVAYAVKAVAESKEDGAA</sequence>
<dbReference type="EMBL" id="CP000024">
    <property type="protein sequence ID" value="AAV62132.1"/>
    <property type="status" value="ALT_INIT"/>
    <property type="molecule type" value="Genomic_DNA"/>
</dbReference>
<dbReference type="RefSeq" id="WP_011225635.1">
    <property type="nucleotide sequence ID" value="NC_006449.1"/>
</dbReference>
<dbReference type="SMR" id="Q5M0W5"/>
<dbReference type="GeneID" id="66898437"/>
<dbReference type="KEGG" id="stc:str0536"/>
<dbReference type="HOGENOM" id="CLU_092227_2_0_9"/>
<dbReference type="GO" id="GO:0015934">
    <property type="term" value="C:large ribosomal subunit"/>
    <property type="evidence" value="ECO:0007669"/>
    <property type="project" value="InterPro"/>
</dbReference>
<dbReference type="GO" id="GO:0070180">
    <property type="term" value="F:large ribosomal subunit rRNA binding"/>
    <property type="evidence" value="ECO:0007669"/>
    <property type="project" value="UniProtKB-UniRule"/>
</dbReference>
<dbReference type="GO" id="GO:0003735">
    <property type="term" value="F:structural constituent of ribosome"/>
    <property type="evidence" value="ECO:0007669"/>
    <property type="project" value="InterPro"/>
</dbReference>
<dbReference type="GO" id="GO:0006412">
    <property type="term" value="P:translation"/>
    <property type="evidence" value="ECO:0007669"/>
    <property type="project" value="UniProtKB-UniRule"/>
</dbReference>
<dbReference type="CDD" id="cd05797">
    <property type="entry name" value="Ribosomal_L10"/>
    <property type="match status" value="1"/>
</dbReference>
<dbReference type="FunFam" id="3.30.70.1730:FF:000001">
    <property type="entry name" value="50S ribosomal protein L10"/>
    <property type="match status" value="1"/>
</dbReference>
<dbReference type="Gene3D" id="3.30.70.1730">
    <property type="match status" value="1"/>
</dbReference>
<dbReference type="HAMAP" id="MF_00362">
    <property type="entry name" value="Ribosomal_uL10"/>
    <property type="match status" value="1"/>
</dbReference>
<dbReference type="InterPro" id="IPR001790">
    <property type="entry name" value="Ribosomal_uL10"/>
</dbReference>
<dbReference type="InterPro" id="IPR043141">
    <property type="entry name" value="Ribosomal_uL10-like_sf"/>
</dbReference>
<dbReference type="InterPro" id="IPR022973">
    <property type="entry name" value="Ribosomal_uL10_bac"/>
</dbReference>
<dbReference type="InterPro" id="IPR047865">
    <property type="entry name" value="Ribosomal_uL10_bac_type"/>
</dbReference>
<dbReference type="InterPro" id="IPR002363">
    <property type="entry name" value="Ribosomal_uL10_CS_bac"/>
</dbReference>
<dbReference type="NCBIfam" id="NF000955">
    <property type="entry name" value="PRK00099.1-1"/>
    <property type="match status" value="1"/>
</dbReference>
<dbReference type="PANTHER" id="PTHR11560">
    <property type="entry name" value="39S RIBOSOMAL PROTEIN L10, MITOCHONDRIAL"/>
    <property type="match status" value="1"/>
</dbReference>
<dbReference type="Pfam" id="PF00466">
    <property type="entry name" value="Ribosomal_L10"/>
    <property type="match status" value="1"/>
</dbReference>
<dbReference type="SUPFAM" id="SSF160369">
    <property type="entry name" value="Ribosomal protein L10-like"/>
    <property type="match status" value="1"/>
</dbReference>
<dbReference type="PROSITE" id="PS01109">
    <property type="entry name" value="RIBOSOMAL_L10"/>
    <property type="match status" value="1"/>
</dbReference>
<organism>
    <name type="scientific">Streptococcus thermophilus (strain CNRZ 1066)</name>
    <dbReference type="NCBI Taxonomy" id="299768"/>
    <lineage>
        <taxon>Bacteria</taxon>
        <taxon>Bacillati</taxon>
        <taxon>Bacillota</taxon>
        <taxon>Bacilli</taxon>
        <taxon>Lactobacillales</taxon>
        <taxon>Streptococcaceae</taxon>
        <taxon>Streptococcus</taxon>
    </lineage>
</organism>